<protein>
    <recommendedName>
        <fullName>5'-adenylylsulfate reductase 1, chloroplastic</fullName>
        <ecNumber>1.8.4.9</ecNumber>
    </recommendedName>
    <alternativeName>
        <fullName>3'-phosphoadenosine-5'-phosphosulfate reductase homolog 19</fullName>
        <shortName>PAPS reductase homolog 19</shortName>
        <shortName>Prh-19</shortName>
    </alternativeName>
    <alternativeName>
        <fullName>Adenosine 5'-phosphosulfate 5'-adenylylsulfate sulfotransferase 1</fullName>
        <shortName>APS sulfotransferase 1</shortName>
    </alternativeName>
    <alternativeName>
        <fullName>Thioredoxin-independent APS reductase 1</fullName>
    </alternativeName>
</protein>
<organism>
    <name type="scientific">Arabidopsis thaliana</name>
    <name type="common">Mouse-ear cress</name>
    <dbReference type="NCBI Taxonomy" id="3702"/>
    <lineage>
        <taxon>Eukaryota</taxon>
        <taxon>Viridiplantae</taxon>
        <taxon>Streptophyta</taxon>
        <taxon>Embryophyta</taxon>
        <taxon>Tracheophyta</taxon>
        <taxon>Spermatophyta</taxon>
        <taxon>Magnoliopsida</taxon>
        <taxon>eudicotyledons</taxon>
        <taxon>Gunneridae</taxon>
        <taxon>Pentapetalae</taxon>
        <taxon>rosids</taxon>
        <taxon>malvids</taxon>
        <taxon>Brassicales</taxon>
        <taxon>Brassicaceae</taxon>
        <taxon>Camelineae</taxon>
        <taxon>Arabidopsis</taxon>
    </lineage>
</organism>
<accession>P92979</accession>
<accession>O48886</accession>
<accession>Q39248</accession>
<accession>Q56ZY2</accession>
<accession>Q8LA60</accession>
<keyword id="KW-0002">3D-structure</keyword>
<keyword id="KW-0004">4Fe-4S</keyword>
<keyword id="KW-0028">Amino-acid biosynthesis</keyword>
<keyword id="KW-0150">Chloroplast</keyword>
<keyword id="KW-0198">Cysteine biosynthesis</keyword>
<keyword id="KW-1015">Disulfide bond</keyword>
<keyword id="KW-0408">Iron</keyword>
<keyword id="KW-0411">Iron-sulfur</keyword>
<keyword id="KW-0479">Metal-binding</keyword>
<keyword id="KW-0560">Oxidoreductase</keyword>
<keyword id="KW-0934">Plastid</keyword>
<keyword id="KW-0676">Redox-active center</keyword>
<keyword id="KW-1185">Reference proteome</keyword>
<keyword id="KW-0346">Stress response</keyword>
<keyword id="KW-0809">Transit peptide</keyword>
<name>APR1_ARATH</name>
<comment type="function">
    <text>Reduces sulfate for Cys biosynthesis. Substrate preference is adenosine-5'-phosphosulfate (APS) &gt;&gt; 3'-phosphoadenosine-5'-phosphosulfate (PAPS). Uses glutathione or DTT as source of protons.</text>
</comment>
<comment type="catalytic activity">
    <reaction>
        <text>glutathione disulfide + sulfite + AMP + 2 H(+) = adenosine 5'-phosphosulfate + 2 glutathione</text>
        <dbReference type="Rhea" id="RHEA:14141"/>
        <dbReference type="ChEBI" id="CHEBI:15378"/>
        <dbReference type="ChEBI" id="CHEBI:17359"/>
        <dbReference type="ChEBI" id="CHEBI:57925"/>
        <dbReference type="ChEBI" id="CHEBI:58243"/>
        <dbReference type="ChEBI" id="CHEBI:58297"/>
        <dbReference type="ChEBI" id="CHEBI:456215"/>
        <dbReference type="EC" id="1.8.4.9"/>
    </reaction>
</comment>
<comment type="cofactor">
    <cofactor evidence="1">
        <name>[4Fe-4S] cluster</name>
        <dbReference type="ChEBI" id="CHEBI:49883"/>
    </cofactor>
    <text evidence="1">Binds 1 [4Fe-4S] cluster.</text>
</comment>
<comment type="activity regulation">
    <text>Stimulated by sodium sulfate &gt; ammonium sulfate and is sensitive to inactivation by 5'AMP.</text>
</comment>
<comment type="biophysicochemical properties">
    <phDependence>
        <text>Optimum pH is 8.5.</text>
    </phDependence>
</comment>
<comment type="subcellular location">
    <subcellularLocation>
        <location evidence="6">Plastid</location>
        <location evidence="6">Chloroplast</location>
    </subcellularLocation>
</comment>
<comment type="tissue specificity">
    <text>Leaves, roots and stem.</text>
</comment>
<comment type="induction">
    <text evidence="4 5">Induced by sulfate starvation (PubMed:8917599). Induced by cadmium (PubMed:16502469).</text>
</comment>
<comment type="domain">
    <text>The C-terminal domain may function as glutaredoxin and mediates the interaction of the enzyme with glutathione (GSH). Active in GSH-dependent reduction of hydroxyethyldisulfide, cystine, dehydroascorbate, insulin disulfides and ribonucleotide reductase.</text>
</comment>
<comment type="similarity">
    <text evidence="6">Belongs to the APS reductase family.</text>
</comment>
<comment type="sequence caution" evidence="6">
    <conflict type="frameshift">
        <sequence resource="EMBL-CDS" id="AAC49573"/>
    </conflict>
</comment>
<proteinExistence type="evidence at protein level"/>
<evidence type="ECO:0000250" key="1"/>
<evidence type="ECO:0000255" key="2"/>
<evidence type="ECO:0000255" key="3">
    <source>
        <dbReference type="PROSITE-ProRule" id="PRU00691"/>
    </source>
</evidence>
<evidence type="ECO:0000269" key="4">
    <source>
    </source>
</evidence>
<evidence type="ECO:0000269" key="5">
    <source>
    </source>
</evidence>
<evidence type="ECO:0000305" key="6"/>
<evidence type="ECO:0007829" key="7">
    <source>
        <dbReference type="PDB" id="5YRY"/>
    </source>
</evidence>
<reference key="1">
    <citation type="journal article" date="1996" name="Proc. Natl. Acad. Sci. U.S.A.">
        <title>Three members of a novel small gene-family from Arabidopsis thaliana able to complement functionally an Escherichia coli mutant defective in PAPS reductase activity encode proteins with a thioredoxin-like domain and 'APS reductase' activity.</title>
        <authorList>
            <person name="Gutierrez-Marcos J.F."/>
            <person name="Roberts M.A."/>
            <person name="Campbell E.I."/>
            <person name="Wray J.L."/>
        </authorList>
    </citation>
    <scope>NUCLEOTIDE SEQUENCE [MRNA]</scope>
    <scope>INDUCTION</scope>
    <source>
        <strain>cv. Columbia</strain>
    </source>
</reference>
<reference key="2">
    <citation type="journal article" date="1996" name="Proc. Natl. Acad. Sci. U.S.A.">
        <title>Sulfate reduction in higher plants: molecular evidence for a novel 5'-adenylylsulfate reductase.</title>
        <authorList>
            <person name="Setya A."/>
            <person name="Murillo M."/>
            <person name="Leustek T."/>
        </authorList>
    </citation>
    <scope>NUCLEOTIDE SEQUENCE [GENOMIC DNA / MRNA]</scope>
    <source>
        <strain>cv. Columbia</strain>
    </source>
</reference>
<reference key="3">
    <citation type="online journal article" date="1998" name="Plant Gene Register">
        <title>Three genomic clones from Arabidopsis thaliana encoding 5'-adenylysulfate reductase.</title>
        <authorList>
            <person name="Chen Y.C."/>
            <person name="Leustek T."/>
        </authorList>
        <locator>PGR98-030</locator>
    </citation>
    <scope>NUCLEOTIDE SEQUENCE [GENOMIC DNA]</scope>
    <source>
        <strain>cv. Columbia</strain>
    </source>
</reference>
<reference key="4">
    <citation type="journal article" date="1999" name="Nature">
        <title>Sequence and analysis of chromosome 4 of the plant Arabidopsis thaliana.</title>
        <authorList>
            <person name="Mayer K.F.X."/>
            <person name="Schueller C."/>
            <person name="Wambutt R."/>
            <person name="Murphy G."/>
            <person name="Volckaert G."/>
            <person name="Pohl T."/>
            <person name="Duesterhoeft A."/>
            <person name="Stiekema W."/>
            <person name="Entian K.-D."/>
            <person name="Terryn N."/>
            <person name="Harris B."/>
            <person name="Ansorge W."/>
            <person name="Brandt P."/>
            <person name="Grivell L.A."/>
            <person name="Rieger M."/>
            <person name="Weichselgartner M."/>
            <person name="de Simone V."/>
            <person name="Obermaier B."/>
            <person name="Mache R."/>
            <person name="Mueller M."/>
            <person name="Kreis M."/>
            <person name="Delseny M."/>
            <person name="Puigdomenech P."/>
            <person name="Watson M."/>
            <person name="Schmidtheini T."/>
            <person name="Reichert B."/>
            <person name="Portetelle D."/>
            <person name="Perez-Alonso M."/>
            <person name="Boutry M."/>
            <person name="Bancroft I."/>
            <person name="Vos P."/>
            <person name="Hoheisel J."/>
            <person name="Zimmermann W."/>
            <person name="Wedler H."/>
            <person name="Ridley P."/>
            <person name="Langham S.-A."/>
            <person name="McCullagh B."/>
            <person name="Bilham L."/>
            <person name="Robben J."/>
            <person name="van der Schueren J."/>
            <person name="Grymonprez B."/>
            <person name="Chuang Y.-J."/>
            <person name="Vandenbussche F."/>
            <person name="Braeken M."/>
            <person name="Weltjens I."/>
            <person name="Voet M."/>
            <person name="Bastiaens I."/>
            <person name="Aert R."/>
            <person name="Defoor E."/>
            <person name="Weitzenegger T."/>
            <person name="Bothe G."/>
            <person name="Ramsperger U."/>
            <person name="Hilbert H."/>
            <person name="Braun M."/>
            <person name="Holzer E."/>
            <person name="Brandt A."/>
            <person name="Peters S."/>
            <person name="van Staveren M."/>
            <person name="Dirkse W."/>
            <person name="Mooijman P."/>
            <person name="Klein Lankhorst R."/>
            <person name="Rose M."/>
            <person name="Hauf J."/>
            <person name="Koetter P."/>
            <person name="Berneiser S."/>
            <person name="Hempel S."/>
            <person name="Feldpausch M."/>
            <person name="Lamberth S."/>
            <person name="Van den Daele H."/>
            <person name="De Keyser A."/>
            <person name="Buysshaert C."/>
            <person name="Gielen J."/>
            <person name="Villarroel R."/>
            <person name="De Clercq R."/>
            <person name="van Montagu M."/>
            <person name="Rogers J."/>
            <person name="Cronin A."/>
            <person name="Quail M.A."/>
            <person name="Bray-Allen S."/>
            <person name="Clark L."/>
            <person name="Doggett J."/>
            <person name="Hall S."/>
            <person name="Kay M."/>
            <person name="Lennard N."/>
            <person name="McLay K."/>
            <person name="Mayes R."/>
            <person name="Pettett A."/>
            <person name="Rajandream M.A."/>
            <person name="Lyne M."/>
            <person name="Benes V."/>
            <person name="Rechmann S."/>
            <person name="Borkova D."/>
            <person name="Bloecker H."/>
            <person name="Scharfe M."/>
            <person name="Grimm M."/>
            <person name="Loehnert T.-H."/>
            <person name="Dose S."/>
            <person name="de Haan M."/>
            <person name="Maarse A.C."/>
            <person name="Schaefer M."/>
            <person name="Mueller-Auer S."/>
            <person name="Gabel C."/>
            <person name="Fuchs M."/>
            <person name="Fartmann B."/>
            <person name="Granderath K."/>
            <person name="Dauner D."/>
            <person name="Herzl A."/>
            <person name="Neumann S."/>
            <person name="Argiriou A."/>
            <person name="Vitale D."/>
            <person name="Liguori R."/>
            <person name="Piravandi E."/>
            <person name="Massenet O."/>
            <person name="Quigley F."/>
            <person name="Clabauld G."/>
            <person name="Muendlein A."/>
            <person name="Felber R."/>
            <person name="Schnabl S."/>
            <person name="Hiller R."/>
            <person name="Schmidt W."/>
            <person name="Lecharny A."/>
            <person name="Aubourg S."/>
            <person name="Chefdor F."/>
            <person name="Cooke R."/>
            <person name="Berger C."/>
            <person name="Monfort A."/>
            <person name="Casacuberta E."/>
            <person name="Gibbons T."/>
            <person name="Weber N."/>
            <person name="Vandenbol M."/>
            <person name="Bargues M."/>
            <person name="Terol J."/>
            <person name="Torres A."/>
            <person name="Perez-Perez A."/>
            <person name="Purnelle B."/>
            <person name="Bent E."/>
            <person name="Johnson S."/>
            <person name="Tacon D."/>
            <person name="Jesse T."/>
            <person name="Heijnen L."/>
            <person name="Schwarz S."/>
            <person name="Scholler P."/>
            <person name="Heber S."/>
            <person name="Francs P."/>
            <person name="Bielke C."/>
            <person name="Frishman D."/>
            <person name="Haase D."/>
            <person name="Lemcke K."/>
            <person name="Mewes H.-W."/>
            <person name="Stocker S."/>
            <person name="Zaccaria P."/>
            <person name="Bevan M."/>
            <person name="Wilson R.K."/>
            <person name="de la Bastide M."/>
            <person name="Habermann K."/>
            <person name="Parnell L."/>
            <person name="Dedhia N."/>
            <person name="Gnoj L."/>
            <person name="Schutz K."/>
            <person name="Huang E."/>
            <person name="Spiegel L."/>
            <person name="Sekhon M."/>
            <person name="Murray J."/>
            <person name="Sheet P."/>
            <person name="Cordes M."/>
            <person name="Abu-Threideh J."/>
            <person name="Stoneking T."/>
            <person name="Kalicki J."/>
            <person name="Graves T."/>
            <person name="Harmon G."/>
            <person name="Edwards J."/>
            <person name="Latreille P."/>
            <person name="Courtney L."/>
            <person name="Cloud J."/>
            <person name="Abbott A."/>
            <person name="Scott K."/>
            <person name="Johnson D."/>
            <person name="Minx P."/>
            <person name="Bentley D."/>
            <person name="Fulton B."/>
            <person name="Miller N."/>
            <person name="Greco T."/>
            <person name="Kemp K."/>
            <person name="Kramer J."/>
            <person name="Fulton L."/>
            <person name="Mardis E."/>
            <person name="Dante M."/>
            <person name="Pepin K."/>
            <person name="Hillier L.W."/>
            <person name="Nelson J."/>
            <person name="Spieth J."/>
            <person name="Ryan E."/>
            <person name="Andrews S."/>
            <person name="Geisel C."/>
            <person name="Layman D."/>
            <person name="Du H."/>
            <person name="Ali J."/>
            <person name="Berghoff A."/>
            <person name="Jones K."/>
            <person name="Drone K."/>
            <person name="Cotton M."/>
            <person name="Joshu C."/>
            <person name="Antonoiu B."/>
            <person name="Zidanic M."/>
            <person name="Strong C."/>
            <person name="Sun H."/>
            <person name="Lamar B."/>
            <person name="Yordan C."/>
            <person name="Ma P."/>
            <person name="Zhong J."/>
            <person name="Preston R."/>
            <person name="Vil D."/>
            <person name="Shekher M."/>
            <person name="Matero A."/>
            <person name="Shah R."/>
            <person name="Swaby I.K."/>
            <person name="O'Shaughnessy A."/>
            <person name="Rodriguez M."/>
            <person name="Hoffman J."/>
            <person name="Till S."/>
            <person name="Granat S."/>
            <person name="Shohdy N."/>
            <person name="Hasegawa A."/>
            <person name="Hameed A."/>
            <person name="Lodhi M."/>
            <person name="Johnson A."/>
            <person name="Chen E."/>
            <person name="Marra M.A."/>
            <person name="Martienssen R."/>
            <person name="McCombie W.R."/>
        </authorList>
    </citation>
    <scope>NUCLEOTIDE SEQUENCE [LARGE SCALE GENOMIC DNA]</scope>
    <source>
        <strain>cv. Columbia</strain>
    </source>
</reference>
<reference key="5">
    <citation type="journal article" date="2017" name="Plant J.">
        <title>Araport11: a complete reannotation of the Arabidopsis thaliana reference genome.</title>
        <authorList>
            <person name="Cheng C.Y."/>
            <person name="Krishnakumar V."/>
            <person name="Chan A.P."/>
            <person name="Thibaud-Nissen F."/>
            <person name="Schobel S."/>
            <person name="Town C.D."/>
        </authorList>
    </citation>
    <scope>GENOME REANNOTATION</scope>
    <source>
        <strain>cv. Columbia</strain>
    </source>
</reference>
<reference key="6">
    <citation type="journal article" date="2003" name="Science">
        <title>Empirical analysis of transcriptional activity in the Arabidopsis genome.</title>
        <authorList>
            <person name="Yamada K."/>
            <person name="Lim J."/>
            <person name="Dale J.M."/>
            <person name="Chen H."/>
            <person name="Shinn P."/>
            <person name="Palm C.J."/>
            <person name="Southwick A.M."/>
            <person name="Wu H.C."/>
            <person name="Kim C.J."/>
            <person name="Nguyen M."/>
            <person name="Pham P.K."/>
            <person name="Cheuk R.F."/>
            <person name="Karlin-Newmann G."/>
            <person name="Liu S.X."/>
            <person name="Lam B."/>
            <person name="Sakano H."/>
            <person name="Wu T."/>
            <person name="Yu G."/>
            <person name="Miranda M."/>
            <person name="Quach H.L."/>
            <person name="Tripp M."/>
            <person name="Chang C.H."/>
            <person name="Lee J.M."/>
            <person name="Toriumi M.J."/>
            <person name="Chan M.M."/>
            <person name="Tang C.C."/>
            <person name="Onodera C.S."/>
            <person name="Deng J.M."/>
            <person name="Akiyama K."/>
            <person name="Ansari Y."/>
            <person name="Arakawa T."/>
            <person name="Banh J."/>
            <person name="Banno F."/>
            <person name="Bowser L."/>
            <person name="Brooks S.Y."/>
            <person name="Carninci P."/>
            <person name="Chao Q."/>
            <person name="Choy N."/>
            <person name="Enju A."/>
            <person name="Goldsmith A.D."/>
            <person name="Gurjal M."/>
            <person name="Hansen N.F."/>
            <person name="Hayashizaki Y."/>
            <person name="Johnson-Hopson C."/>
            <person name="Hsuan V.W."/>
            <person name="Iida K."/>
            <person name="Karnes M."/>
            <person name="Khan S."/>
            <person name="Koesema E."/>
            <person name="Ishida J."/>
            <person name="Jiang P.X."/>
            <person name="Jones T."/>
            <person name="Kawai J."/>
            <person name="Kamiya A."/>
            <person name="Meyers C."/>
            <person name="Nakajima M."/>
            <person name="Narusaka M."/>
            <person name="Seki M."/>
            <person name="Sakurai T."/>
            <person name="Satou M."/>
            <person name="Tamse R."/>
            <person name="Vaysberg M."/>
            <person name="Wallender E.K."/>
            <person name="Wong C."/>
            <person name="Yamamura Y."/>
            <person name="Yuan S."/>
            <person name="Shinozaki K."/>
            <person name="Davis R.W."/>
            <person name="Theologis A."/>
            <person name="Ecker J.R."/>
        </authorList>
    </citation>
    <scope>NUCLEOTIDE SEQUENCE [LARGE SCALE MRNA]</scope>
    <source>
        <strain>cv. Columbia</strain>
    </source>
</reference>
<reference key="7">
    <citation type="submission" date="2002-03" db="EMBL/GenBank/DDBJ databases">
        <title>Full-length cDNA from Arabidopsis thaliana.</title>
        <authorList>
            <person name="Brover V.V."/>
            <person name="Troukhan M.E."/>
            <person name="Alexandrov N.A."/>
            <person name="Lu Y.-P."/>
            <person name="Flavell R.B."/>
            <person name="Feldmann K.A."/>
        </authorList>
    </citation>
    <scope>NUCLEOTIDE SEQUENCE [LARGE SCALE MRNA]</scope>
</reference>
<reference key="8">
    <citation type="submission" date="2005-03" db="EMBL/GenBank/DDBJ databases">
        <title>Large-scale analysis of RIKEN Arabidopsis full-length (RAFL) cDNAs.</title>
        <authorList>
            <person name="Totoki Y."/>
            <person name="Seki M."/>
            <person name="Ishida J."/>
            <person name="Nakajima M."/>
            <person name="Enju A."/>
            <person name="Kamiya A."/>
            <person name="Narusaka M."/>
            <person name="Shin-i T."/>
            <person name="Nakagawa M."/>
            <person name="Sakamoto N."/>
            <person name="Oishi K."/>
            <person name="Kohara Y."/>
            <person name="Kobayashi M."/>
            <person name="Toyoda A."/>
            <person name="Sakaki Y."/>
            <person name="Sakurai T."/>
            <person name="Iida K."/>
            <person name="Akiyama K."/>
            <person name="Satou M."/>
            <person name="Toyoda T."/>
            <person name="Konagaya A."/>
            <person name="Carninci P."/>
            <person name="Kawai J."/>
            <person name="Hayashizaki Y."/>
            <person name="Shinozaki K."/>
        </authorList>
    </citation>
    <scope>NUCLEOTIDE SEQUENCE [LARGE SCALE MRNA] OF 315-465</scope>
    <source>
        <strain>cv. Columbia</strain>
    </source>
</reference>
<reference key="9">
    <citation type="journal article" date="1998" name="Proc. Natl. Acad. Sci. U.S.A.">
        <title>Glutaredoxin function for the carboxyl-terminal domain of the plant-type 5'-adenylylsulfate reductase.</title>
        <authorList>
            <person name="Bick J.-A."/>
            <person name="Aaslund F."/>
            <person name="Chen Y.C."/>
            <person name="Leustek T."/>
        </authorList>
    </citation>
    <scope>CHARACTERIZATION OF DOMAINS</scope>
    <source>
        <strain>cv. Columbia</strain>
    </source>
</reference>
<reference key="10">
    <citation type="journal article" date="2006" name="Proteomics">
        <title>The early responses of Arabidopsis thaliana cells to cadmium exposure explored by protein and metabolite profiling analyses.</title>
        <authorList>
            <person name="Sarry J.-E."/>
            <person name="Kuhn L."/>
            <person name="Ducruix C."/>
            <person name="Lafaye A."/>
            <person name="Junot C."/>
            <person name="Hugouvieux V."/>
            <person name="Jourdain A."/>
            <person name="Bastien O."/>
            <person name="Fievet J.B."/>
            <person name="Vailhen D."/>
            <person name="Amekraz B."/>
            <person name="Moulin C."/>
            <person name="Ezan E."/>
            <person name="Garin J."/>
            <person name="Bourguignon J."/>
        </authorList>
    </citation>
    <scope>INDUCTION BY CADMIUM</scope>
    <source>
        <strain>cv. Columbia</strain>
    </source>
</reference>
<sequence length="465" mass="51714">MAMSVNVSSSSSSGIINSRFGVSLEPKVSQIGSLRLLDRVHVAPVSLNLSGKRSSSVKPLNAEPKTKDSMIPLAATMVAEIAEEVEVVEIEDFEELAKKLENASPLEIMDKALEKYGNDIAIAFSGAEDVALIEYAHLTGRPFRVFSLDTGRLNPETYRFFDAVEKHYGIRIEYMFPDSVEVQGLVRSKGLFSFYEDGHQECCRVRKVRPLRRALKGLKAWITGQRKDQSPGTRSEIPVVQVDPVFEGLDGGVGSLVKWNPVANVEGNDVWNFLRTMDVPVNTLHAAGYISIGCEPCTKAVLPGQHEREGRWWWEDAKAKECGLHKGNVKENSDDAKVNGESKSAVADIFKSENLVTLSRQGIENLMKLENRKEPWIVVLYAPWCPFCQAMEASYDELADKLAGSGIKVAKFRADGDQKEFAKQELQLGSFPTILVFPKNSSRPIKYPSEKRDVESLTSFLNLVR</sequence>
<gene>
    <name type="primary">APR1</name>
    <name type="synonym">PRH19</name>
    <name type="ordered locus">At4g04610</name>
    <name type="ORF">F4H6.13</name>
</gene>
<feature type="transit peptide" description="Chloroplast" evidence="2">
    <location>
        <begin position="1"/>
        <end position="53"/>
    </location>
</feature>
<feature type="chain" id="PRO_0000023214" description="5'-adenylylsulfate reductase 1, chloroplastic">
    <location>
        <begin position="54"/>
        <end position="465"/>
    </location>
</feature>
<feature type="domain" description="Thioredoxin" evidence="3">
    <location>
        <begin position="344"/>
        <end position="465"/>
    </location>
</feature>
<feature type="region of interest" description="Reductase domain">
    <location>
        <begin position="73"/>
        <end position="327"/>
    </location>
</feature>
<feature type="active site" description="Nucleophile" evidence="1">
    <location>
        <position position="385"/>
    </location>
</feature>
<feature type="active site" description="Nucleophile" evidence="1">
    <location>
        <position position="388"/>
    </location>
</feature>
<feature type="disulfide bond" description="Redox-active" evidence="3">
    <location>
        <begin position="385"/>
        <end position="388"/>
    </location>
</feature>
<feature type="sequence conflict" description="In Ref. 7; AAM65557." evidence="6" ref="7">
    <original>K</original>
    <variation>N</variation>
    <location>
        <position position="67"/>
    </location>
</feature>
<feature type="sequence conflict" description="In Ref. 2; AAC49573." evidence="6" ref="2">
    <original>E</original>
    <variation>D</variation>
    <location>
        <position position="86"/>
    </location>
</feature>
<feature type="sequence conflict" description="In Ref. 2; AAC49573." evidence="6" ref="2">
    <original>LDGGV</original>
    <variation>WMVEF</variation>
    <location>
        <begin position="249"/>
        <end position="253"/>
    </location>
</feature>
<feature type="sequence conflict" description="In Ref. 1; AAC49561." evidence="6" ref="1">
    <original>N</original>
    <variation>F</variation>
    <location>
        <position position="371"/>
    </location>
</feature>
<feature type="sequence conflict" description="In Ref. 2; AAC49573." evidence="6" ref="2">
    <location>
        <position position="392"/>
    </location>
</feature>
<feature type="sequence conflict" description="In Ref. 1; AAC49561." evidence="6" ref="1">
    <original>D</original>
    <variation>A</variation>
    <location>
        <position position="400"/>
    </location>
</feature>
<feature type="sequence conflict" description="In Ref. 1; AAC49561." evidence="6" ref="1">
    <original>I</original>
    <variation>D</variation>
    <location>
        <position position="407"/>
    </location>
</feature>
<feature type="strand" evidence="7">
    <location>
        <begin position="355"/>
        <end position="357"/>
    </location>
</feature>
<feature type="helix" evidence="7">
    <location>
        <begin position="360"/>
        <end position="368"/>
    </location>
</feature>
<feature type="strand" evidence="7">
    <location>
        <begin position="376"/>
        <end position="381"/>
    </location>
</feature>
<feature type="helix" evidence="7">
    <location>
        <begin position="386"/>
        <end position="402"/>
    </location>
</feature>
<feature type="strand" evidence="7">
    <location>
        <begin position="408"/>
        <end position="413"/>
    </location>
</feature>
<feature type="helix" evidence="7">
    <location>
        <begin position="418"/>
        <end position="425"/>
    </location>
</feature>
<feature type="strand" evidence="7">
    <location>
        <begin position="430"/>
        <end position="437"/>
    </location>
</feature>
<feature type="strand" evidence="7">
    <location>
        <begin position="445"/>
        <end position="447"/>
    </location>
</feature>
<feature type="helix" evidence="7">
    <location>
        <begin position="451"/>
        <end position="461"/>
    </location>
</feature>
<dbReference type="EC" id="1.8.4.9"/>
<dbReference type="EMBL" id="U53864">
    <property type="protein sequence ID" value="AAC49561.1"/>
    <property type="molecule type" value="mRNA"/>
</dbReference>
<dbReference type="EMBL" id="U43412">
    <property type="protein sequence ID" value="AAC49573.1"/>
    <property type="status" value="ALT_FRAME"/>
    <property type="molecule type" value="mRNA"/>
</dbReference>
<dbReference type="EMBL" id="AF016282">
    <property type="protein sequence ID" value="AAC26979.1"/>
    <property type="molecule type" value="Genomic_DNA"/>
</dbReference>
<dbReference type="EMBL" id="AF074021">
    <property type="protein sequence ID" value="AAD29775.1"/>
    <property type="molecule type" value="Genomic_DNA"/>
</dbReference>
<dbReference type="EMBL" id="AL161501">
    <property type="protein sequence ID" value="CAB80826.1"/>
    <property type="molecule type" value="Genomic_DNA"/>
</dbReference>
<dbReference type="EMBL" id="CP002687">
    <property type="protein sequence ID" value="AEE82402.1"/>
    <property type="molecule type" value="Genomic_DNA"/>
</dbReference>
<dbReference type="EMBL" id="AF424582">
    <property type="protein sequence ID" value="AAL11576.1"/>
    <property type="molecule type" value="mRNA"/>
</dbReference>
<dbReference type="EMBL" id="BT002612">
    <property type="protein sequence ID" value="AAO11528.1"/>
    <property type="molecule type" value="mRNA"/>
</dbReference>
<dbReference type="EMBL" id="AY088011">
    <property type="protein sequence ID" value="AAM65557.1"/>
    <property type="molecule type" value="mRNA"/>
</dbReference>
<dbReference type="EMBL" id="AK220828">
    <property type="protein sequence ID" value="BAD94133.1"/>
    <property type="molecule type" value="mRNA"/>
</dbReference>
<dbReference type="PIR" id="B85058">
    <property type="entry name" value="B85058"/>
</dbReference>
<dbReference type="RefSeq" id="NP_192370.1">
    <property type="nucleotide sequence ID" value="NM_116699.3"/>
</dbReference>
<dbReference type="PDB" id="5YRY">
    <property type="method" value="X-ray"/>
    <property type="resolution" value="2.70 A"/>
    <property type="chains" value="A=353-461"/>
</dbReference>
<dbReference type="PDBsum" id="5YRY"/>
<dbReference type="SMR" id="P92979"/>
<dbReference type="FunCoup" id="P92979">
    <property type="interactions" value="146"/>
</dbReference>
<dbReference type="STRING" id="3702.P92979"/>
<dbReference type="PaxDb" id="3702-AT4G04610.1"/>
<dbReference type="ProteomicsDB" id="240602"/>
<dbReference type="EnsemblPlants" id="AT4G04610.1">
    <property type="protein sequence ID" value="AT4G04610.1"/>
    <property type="gene ID" value="AT4G04610"/>
</dbReference>
<dbReference type="GeneID" id="825793"/>
<dbReference type="Gramene" id="AT4G04610.1">
    <property type="protein sequence ID" value="AT4G04610.1"/>
    <property type="gene ID" value="AT4G04610"/>
</dbReference>
<dbReference type="KEGG" id="ath:AT4G04610"/>
<dbReference type="Araport" id="AT4G04610"/>
<dbReference type="TAIR" id="AT4G04610">
    <property type="gene designation" value="APR1"/>
</dbReference>
<dbReference type="eggNOG" id="KOG0189">
    <property type="taxonomic scope" value="Eukaryota"/>
</dbReference>
<dbReference type="eggNOG" id="KOG0191">
    <property type="taxonomic scope" value="Eukaryota"/>
</dbReference>
<dbReference type="HOGENOM" id="CLU_044089_4_0_1"/>
<dbReference type="InParanoid" id="P92979"/>
<dbReference type="OMA" id="MAMSVNV"/>
<dbReference type="OrthoDB" id="7869097at2759"/>
<dbReference type="PhylomeDB" id="P92979"/>
<dbReference type="BioCyc" id="MetaCyc:AT4G04610-MONOMER"/>
<dbReference type="BRENDA" id="1.8.4.9">
    <property type="organism ID" value="399"/>
</dbReference>
<dbReference type="PRO" id="PR:P92979"/>
<dbReference type="Proteomes" id="UP000006548">
    <property type="component" value="Chromosome 4"/>
</dbReference>
<dbReference type="ExpressionAtlas" id="P92979">
    <property type="expression patterns" value="baseline and differential"/>
</dbReference>
<dbReference type="GO" id="GO:0009507">
    <property type="term" value="C:chloroplast"/>
    <property type="evidence" value="ECO:0000250"/>
    <property type="project" value="TAIR"/>
</dbReference>
<dbReference type="GO" id="GO:0009570">
    <property type="term" value="C:chloroplast stroma"/>
    <property type="evidence" value="ECO:0000314"/>
    <property type="project" value="TAIR"/>
</dbReference>
<dbReference type="GO" id="GO:0009536">
    <property type="term" value="C:plastid"/>
    <property type="evidence" value="ECO:0000304"/>
    <property type="project" value="TAIR"/>
</dbReference>
<dbReference type="GO" id="GO:0051539">
    <property type="term" value="F:4 iron, 4 sulfur cluster binding"/>
    <property type="evidence" value="ECO:0007669"/>
    <property type="project" value="UniProtKB-KW"/>
</dbReference>
<dbReference type="GO" id="GO:0033741">
    <property type="term" value="F:adenylyl-sulfate reductase (glutathione) activity"/>
    <property type="evidence" value="ECO:0007669"/>
    <property type="project" value="UniProtKB-EC"/>
</dbReference>
<dbReference type="GO" id="GO:0009973">
    <property type="term" value="F:adenylyl-sulfate reductase activity"/>
    <property type="evidence" value="ECO:0000314"/>
    <property type="project" value="TAIR"/>
</dbReference>
<dbReference type="GO" id="GO:0046872">
    <property type="term" value="F:metal ion binding"/>
    <property type="evidence" value="ECO:0007669"/>
    <property type="project" value="UniProtKB-KW"/>
</dbReference>
<dbReference type="GO" id="GO:0004604">
    <property type="term" value="F:phosphoadenylyl-sulfate reductase (thioredoxin) activity"/>
    <property type="evidence" value="ECO:0007669"/>
    <property type="project" value="InterPro"/>
</dbReference>
<dbReference type="GO" id="GO:0019344">
    <property type="term" value="P:cysteine biosynthetic process"/>
    <property type="evidence" value="ECO:0007669"/>
    <property type="project" value="UniProtKB-KW"/>
</dbReference>
<dbReference type="GO" id="GO:0000103">
    <property type="term" value="P:sulfate assimilation"/>
    <property type="evidence" value="ECO:0000314"/>
    <property type="project" value="TAIR"/>
</dbReference>
<dbReference type="GO" id="GO:0019379">
    <property type="term" value="P:sulfate assimilation, phosphoadenylyl sulfate reduction by phosphoadenylyl-sulfate reductase (thioredoxin)"/>
    <property type="evidence" value="ECO:0007669"/>
    <property type="project" value="InterPro"/>
</dbReference>
<dbReference type="CDD" id="cd23945">
    <property type="entry name" value="PAPS_reductase"/>
    <property type="match status" value="1"/>
</dbReference>
<dbReference type="CDD" id="cd02993">
    <property type="entry name" value="PDI_a_APS_reductase"/>
    <property type="match status" value="1"/>
</dbReference>
<dbReference type="FunFam" id="3.40.50.620:FF:000153">
    <property type="entry name" value="Phosphoadenosine phosphosulfate reductase"/>
    <property type="match status" value="1"/>
</dbReference>
<dbReference type="FunFam" id="3.40.30.10:FF:000252">
    <property type="entry name" value="Phosphoadenosine-phosphosulphate reductase"/>
    <property type="match status" value="1"/>
</dbReference>
<dbReference type="Gene3D" id="3.40.30.10">
    <property type="entry name" value="Glutaredoxin"/>
    <property type="match status" value="1"/>
</dbReference>
<dbReference type="Gene3D" id="3.40.50.620">
    <property type="entry name" value="HUPs"/>
    <property type="match status" value="1"/>
</dbReference>
<dbReference type="HAMAP" id="MF_00063">
    <property type="entry name" value="CysH"/>
    <property type="match status" value="1"/>
</dbReference>
<dbReference type="InterPro" id="IPR004511">
    <property type="entry name" value="PAPS/APS_Rdtase"/>
</dbReference>
<dbReference type="InterPro" id="IPR002500">
    <property type="entry name" value="PAPS_reduct_dom"/>
</dbReference>
<dbReference type="InterPro" id="IPR014729">
    <property type="entry name" value="Rossmann-like_a/b/a_fold"/>
</dbReference>
<dbReference type="InterPro" id="IPR004508">
    <property type="entry name" value="Thioredoxin-indep_APS_Rdtase"/>
</dbReference>
<dbReference type="InterPro" id="IPR036249">
    <property type="entry name" value="Thioredoxin-like_sf"/>
</dbReference>
<dbReference type="InterPro" id="IPR013766">
    <property type="entry name" value="Thioredoxin_domain"/>
</dbReference>
<dbReference type="NCBIfam" id="TIGR00424">
    <property type="entry name" value="APS_reduc"/>
    <property type="match status" value="1"/>
</dbReference>
<dbReference type="NCBIfam" id="NF002537">
    <property type="entry name" value="PRK02090.1"/>
    <property type="match status" value="1"/>
</dbReference>
<dbReference type="PANTHER" id="PTHR46482:SF9">
    <property type="entry name" value="5'-ADENYLYLSULFATE REDUCTASE 1, CHLOROPLASTIC"/>
    <property type="match status" value="1"/>
</dbReference>
<dbReference type="PANTHER" id="PTHR46482">
    <property type="entry name" value="5'-ADENYLYLSULFATE REDUCTASE 3, CHLOROPLASTIC"/>
    <property type="match status" value="1"/>
</dbReference>
<dbReference type="Pfam" id="PF01507">
    <property type="entry name" value="PAPS_reduct"/>
    <property type="match status" value="1"/>
</dbReference>
<dbReference type="Pfam" id="PF00085">
    <property type="entry name" value="Thioredoxin"/>
    <property type="match status" value="1"/>
</dbReference>
<dbReference type="SUPFAM" id="SSF52402">
    <property type="entry name" value="Adenine nucleotide alpha hydrolases-like"/>
    <property type="match status" value="1"/>
</dbReference>
<dbReference type="SUPFAM" id="SSF52833">
    <property type="entry name" value="Thioredoxin-like"/>
    <property type="match status" value="1"/>
</dbReference>
<dbReference type="PROSITE" id="PS51352">
    <property type="entry name" value="THIOREDOXIN_2"/>
    <property type="match status" value="1"/>
</dbReference>